<evidence type="ECO:0000255" key="1">
    <source>
        <dbReference type="HAMAP-Rule" id="MF_00372"/>
    </source>
</evidence>
<accession>A7ZAE6</accession>
<name>HUTI_BACVZ</name>
<reference key="1">
    <citation type="journal article" date="2007" name="Nat. Biotechnol.">
        <title>Comparative analysis of the complete genome sequence of the plant growth-promoting bacterium Bacillus amyloliquefaciens FZB42.</title>
        <authorList>
            <person name="Chen X.H."/>
            <person name="Koumoutsi A."/>
            <person name="Scholz R."/>
            <person name="Eisenreich A."/>
            <person name="Schneider K."/>
            <person name="Heinemeyer I."/>
            <person name="Morgenstern B."/>
            <person name="Voss B."/>
            <person name="Hess W.R."/>
            <person name="Reva O."/>
            <person name="Junge H."/>
            <person name="Voigt B."/>
            <person name="Jungblut P.R."/>
            <person name="Vater J."/>
            <person name="Suessmuth R."/>
            <person name="Liesegang H."/>
            <person name="Strittmatter A."/>
            <person name="Gottschalk G."/>
            <person name="Borriss R."/>
        </authorList>
    </citation>
    <scope>NUCLEOTIDE SEQUENCE [LARGE SCALE GENOMIC DNA]</scope>
    <source>
        <strain>DSM 23117 / BGSC 10A6 / LMG 26770 / FZB42</strain>
    </source>
</reference>
<comment type="function">
    <text evidence="1">Catalyzes the hydrolytic cleavage of the carbon-nitrogen bond in imidazolone-5-propanoate to yield N-formimidoyl-L-glutamate. It is the third step in the universal histidine degradation pathway.</text>
</comment>
<comment type="catalytic activity">
    <reaction evidence="1">
        <text>4-imidazolone-5-propanoate + H2O = N-formimidoyl-L-glutamate</text>
        <dbReference type="Rhea" id="RHEA:23660"/>
        <dbReference type="ChEBI" id="CHEBI:15377"/>
        <dbReference type="ChEBI" id="CHEBI:58928"/>
        <dbReference type="ChEBI" id="CHEBI:77893"/>
        <dbReference type="EC" id="3.5.2.7"/>
    </reaction>
</comment>
<comment type="cofactor">
    <cofactor evidence="1">
        <name>Zn(2+)</name>
        <dbReference type="ChEBI" id="CHEBI:29105"/>
    </cofactor>
    <cofactor evidence="1">
        <name>Fe(3+)</name>
        <dbReference type="ChEBI" id="CHEBI:29034"/>
    </cofactor>
    <text evidence="1">Binds 1 zinc or iron ion per subunit.</text>
</comment>
<comment type="pathway">
    <text evidence="1">Amino-acid degradation; L-histidine degradation into L-glutamate; N-formimidoyl-L-glutamate from L-histidine: step 3/3.</text>
</comment>
<comment type="subcellular location">
    <subcellularLocation>
        <location evidence="1">Cytoplasm</location>
    </subcellularLocation>
</comment>
<comment type="similarity">
    <text evidence="1">Belongs to the metallo-dependent hydrolases superfamily. HutI family.</text>
</comment>
<proteinExistence type="inferred from homology"/>
<sequence>MPKQIDTILTNIGQLLTMESGGPRSGGSMQDLRVTEDAVIGISDGRIVFAGHQGAEEGYEARDIIDCGGRLVTPGLVDPHTHLVFGGSREKELNLKIQGMSYLDILAQGGGILSTVKDTKAASEEELIEKGLFHLGRMLSYGITTAEVKSGYGLDKDTELKQLTAAKKLGERQPVDLVTTFMGAHAIPPEYRNSPDEFLNRMLQLLPEIKEKGLAQFADIFTETGVFTVSQSRNYLKKASEAGFGLKIHADEIDPLGGAELAAELHAVSADHLVGASDEGIEKLAASGTIAVLLPGTTFYLGKHTYARAREMIDAGVRVSLATDFNPGSSPTENLQLIMSIAALHLKMTAEEIWHAVTVNAAYAIGKGEEAGQIKAGRAADIVIWEAPNYMYIPYHYGVNHVRRVIKNGKTVVSREGAALG</sequence>
<feature type="chain" id="PRO_1000007140" description="Imidazolonepropionase">
    <location>
        <begin position="1"/>
        <end position="421"/>
    </location>
</feature>
<feature type="binding site" evidence="1">
    <location>
        <position position="80"/>
    </location>
    <ligand>
        <name>Fe(3+)</name>
        <dbReference type="ChEBI" id="CHEBI:29034"/>
    </ligand>
</feature>
<feature type="binding site" evidence="1">
    <location>
        <position position="80"/>
    </location>
    <ligand>
        <name>Zn(2+)</name>
        <dbReference type="ChEBI" id="CHEBI:29105"/>
    </ligand>
</feature>
<feature type="binding site" evidence="1">
    <location>
        <position position="82"/>
    </location>
    <ligand>
        <name>Fe(3+)</name>
        <dbReference type="ChEBI" id="CHEBI:29034"/>
    </ligand>
</feature>
<feature type="binding site" evidence="1">
    <location>
        <position position="82"/>
    </location>
    <ligand>
        <name>Zn(2+)</name>
        <dbReference type="ChEBI" id="CHEBI:29105"/>
    </ligand>
</feature>
<feature type="binding site" evidence="1">
    <location>
        <position position="89"/>
    </location>
    <ligand>
        <name>4-imidazolone-5-propanoate</name>
        <dbReference type="ChEBI" id="CHEBI:77893"/>
    </ligand>
</feature>
<feature type="binding site" evidence="1">
    <location>
        <position position="152"/>
    </location>
    <ligand>
        <name>4-imidazolone-5-propanoate</name>
        <dbReference type="ChEBI" id="CHEBI:77893"/>
    </ligand>
</feature>
<feature type="binding site" evidence="1">
    <location>
        <position position="152"/>
    </location>
    <ligand>
        <name>N-formimidoyl-L-glutamate</name>
        <dbReference type="ChEBI" id="CHEBI:58928"/>
    </ligand>
</feature>
<feature type="binding site" evidence="1">
    <location>
        <position position="185"/>
    </location>
    <ligand>
        <name>4-imidazolone-5-propanoate</name>
        <dbReference type="ChEBI" id="CHEBI:77893"/>
    </ligand>
</feature>
<feature type="binding site" evidence="1">
    <location>
        <position position="249"/>
    </location>
    <ligand>
        <name>Fe(3+)</name>
        <dbReference type="ChEBI" id="CHEBI:29034"/>
    </ligand>
</feature>
<feature type="binding site" evidence="1">
    <location>
        <position position="249"/>
    </location>
    <ligand>
        <name>Zn(2+)</name>
        <dbReference type="ChEBI" id="CHEBI:29105"/>
    </ligand>
</feature>
<feature type="binding site" evidence="1">
    <location>
        <position position="252"/>
    </location>
    <ligand>
        <name>4-imidazolone-5-propanoate</name>
        <dbReference type="ChEBI" id="CHEBI:77893"/>
    </ligand>
</feature>
<feature type="binding site" evidence="1">
    <location>
        <position position="324"/>
    </location>
    <ligand>
        <name>Fe(3+)</name>
        <dbReference type="ChEBI" id="CHEBI:29034"/>
    </ligand>
</feature>
<feature type="binding site" evidence="1">
    <location>
        <position position="324"/>
    </location>
    <ligand>
        <name>Zn(2+)</name>
        <dbReference type="ChEBI" id="CHEBI:29105"/>
    </ligand>
</feature>
<feature type="binding site" evidence="1">
    <location>
        <position position="326"/>
    </location>
    <ligand>
        <name>N-formimidoyl-L-glutamate</name>
        <dbReference type="ChEBI" id="CHEBI:58928"/>
    </ligand>
</feature>
<feature type="binding site" evidence="1">
    <location>
        <position position="328"/>
    </location>
    <ligand>
        <name>N-formimidoyl-L-glutamate</name>
        <dbReference type="ChEBI" id="CHEBI:58928"/>
    </ligand>
</feature>
<feature type="binding site" evidence="1">
    <location>
        <position position="329"/>
    </location>
    <ligand>
        <name>4-imidazolone-5-propanoate</name>
        <dbReference type="ChEBI" id="CHEBI:77893"/>
    </ligand>
</feature>
<protein>
    <recommendedName>
        <fullName evidence="1">Imidazolonepropionase</fullName>
        <ecNumber evidence="1">3.5.2.7</ecNumber>
    </recommendedName>
    <alternativeName>
        <fullName evidence="1">Imidazolone-5-propionate hydrolase</fullName>
    </alternativeName>
</protein>
<keyword id="KW-0963">Cytoplasm</keyword>
<keyword id="KW-0369">Histidine metabolism</keyword>
<keyword id="KW-0378">Hydrolase</keyword>
<keyword id="KW-0408">Iron</keyword>
<keyword id="KW-0479">Metal-binding</keyword>
<keyword id="KW-0862">Zinc</keyword>
<gene>
    <name evidence="1" type="primary">hutI</name>
    <name type="ordered locus">RBAM_036430</name>
</gene>
<dbReference type="EC" id="3.5.2.7" evidence="1"/>
<dbReference type="EMBL" id="CP000560">
    <property type="protein sequence ID" value="ABS75972.1"/>
    <property type="molecule type" value="Genomic_DNA"/>
</dbReference>
<dbReference type="RefSeq" id="WP_012118820.1">
    <property type="nucleotide sequence ID" value="NC_009725.2"/>
</dbReference>
<dbReference type="SMR" id="A7ZAE6"/>
<dbReference type="GeneID" id="93082783"/>
<dbReference type="KEGG" id="bay:RBAM_036430"/>
<dbReference type="HOGENOM" id="CLU_041647_0_1_9"/>
<dbReference type="UniPathway" id="UPA00379">
    <property type="reaction ID" value="UER00551"/>
</dbReference>
<dbReference type="Proteomes" id="UP000001120">
    <property type="component" value="Chromosome"/>
</dbReference>
<dbReference type="GO" id="GO:0005737">
    <property type="term" value="C:cytoplasm"/>
    <property type="evidence" value="ECO:0007669"/>
    <property type="project" value="UniProtKB-SubCell"/>
</dbReference>
<dbReference type="GO" id="GO:0050480">
    <property type="term" value="F:imidazolonepropionase activity"/>
    <property type="evidence" value="ECO:0007669"/>
    <property type="project" value="UniProtKB-UniRule"/>
</dbReference>
<dbReference type="GO" id="GO:0005506">
    <property type="term" value="F:iron ion binding"/>
    <property type="evidence" value="ECO:0007669"/>
    <property type="project" value="UniProtKB-UniRule"/>
</dbReference>
<dbReference type="GO" id="GO:0008270">
    <property type="term" value="F:zinc ion binding"/>
    <property type="evidence" value="ECO:0007669"/>
    <property type="project" value="UniProtKB-UniRule"/>
</dbReference>
<dbReference type="GO" id="GO:0019556">
    <property type="term" value="P:L-histidine catabolic process to glutamate and formamide"/>
    <property type="evidence" value="ECO:0007669"/>
    <property type="project" value="UniProtKB-UniPathway"/>
</dbReference>
<dbReference type="GO" id="GO:0019557">
    <property type="term" value="P:L-histidine catabolic process to glutamate and formate"/>
    <property type="evidence" value="ECO:0007669"/>
    <property type="project" value="UniProtKB-UniPathway"/>
</dbReference>
<dbReference type="CDD" id="cd01296">
    <property type="entry name" value="Imidazolone-5PH"/>
    <property type="match status" value="1"/>
</dbReference>
<dbReference type="FunFam" id="3.20.20.140:FF:000007">
    <property type="entry name" value="Imidazolonepropionase"/>
    <property type="match status" value="1"/>
</dbReference>
<dbReference type="Gene3D" id="3.20.20.140">
    <property type="entry name" value="Metal-dependent hydrolases"/>
    <property type="match status" value="1"/>
</dbReference>
<dbReference type="Gene3D" id="2.30.40.10">
    <property type="entry name" value="Urease, subunit C, domain 1"/>
    <property type="match status" value="1"/>
</dbReference>
<dbReference type="HAMAP" id="MF_00372">
    <property type="entry name" value="HutI"/>
    <property type="match status" value="1"/>
</dbReference>
<dbReference type="InterPro" id="IPR013108">
    <property type="entry name" value="Amidohydro_3"/>
</dbReference>
<dbReference type="InterPro" id="IPR005920">
    <property type="entry name" value="HutI"/>
</dbReference>
<dbReference type="InterPro" id="IPR011059">
    <property type="entry name" value="Metal-dep_hydrolase_composite"/>
</dbReference>
<dbReference type="InterPro" id="IPR032466">
    <property type="entry name" value="Metal_Hydrolase"/>
</dbReference>
<dbReference type="NCBIfam" id="TIGR01224">
    <property type="entry name" value="hutI"/>
    <property type="match status" value="1"/>
</dbReference>
<dbReference type="PANTHER" id="PTHR42752">
    <property type="entry name" value="IMIDAZOLONEPROPIONASE"/>
    <property type="match status" value="1"/>
</dbReference>
<dbReference type="PANTHER" id="PTHR42752:SF1">
    <property type="entry name" value="IMIDAZOLONEPROPIONASE-RELATED"/>
    <property type="match status" value="1"/>
</dbReference>
<dbReference type="Pfam" id="PF07969">
    <property type="entry name" value="Amidohydro_3"/>
    <property type="match status" value="1"/>
</dbReference>
<dbReference type="SUPFAM" id="SSF51338">
    <property type="entry name" value="Composite domain of metallo-dependent hydrolases"/>
    <property type="match status" value="2"/>
</dbReference>
<dbReference type="SUPFAM" id="SSF51556">
    <property type="entry name" value="Metallo-dependent hydrolases"/>
    <property type="match status" value="1"/>
</dbReference>
<organism>
    <name type="scientific">Bacillus velezensis (strain DSM 23117 / BGSC 10A6 / LMG 26770 / FZB42)</name>
    <name type="common">Bacillus amyloliquefaciens subsp. plantarum</name>
    <dbReference type="NCBI Taxonomy" id="326423"/>
    <lineage>
        <taxon>Bacteria</taxon>
        <taxon>Bacillati</taxon>
        <taxon>Bacillota</taxon>
        <taxon>Bacilli</taxon>
        <taxon>Bacillales</taxon>
        <taxon>Bacillaceae</taxon>
        <taxon>Bacillus</taxon>
        <taxon>Bacillus amyloliquefaciens group</taxon>
    </lineage>
</organism>